<comment type="function">
    <text evidence="2">Probable calcium-dependent phospholipid-binding protein that may play a role in calcium-mediated intracellular processes.</text>
</comment>
<comment type="cofactor">
    <cofactor evidence="3">
        <name>Ca(2+)</name>
        <dbReference type="ChEBI" id="CHEBI:29108"/>
    </cofactor>
    <text evidence="3">Binds 3 Ca(2+) ions per C2 domain.</text>
</comment>
<comment type="similarity">
    <text evidence="5">Belongs to the copine family.</text>
</comment>
<comment type="caution">
    <text evidence="5">It is uncertain whether Met-1 or Met-14 is the initiator.</text>
</comment>
<gene>
    <name evidence="6" type="primary">Cpne8</name>
</gene>
<name>CPNE8_MOUSE</name>
<organism>
    <name type="scientific">Mus musculus</name>
    <name type="common">Mouse</name>
    <dbReference type="NCBI Taxonomy" id="10090"/>
    <lineage>
        <taxon>Eukaryota</taxon>
        <taxon>Metazoa</taxon>
        <taxon>Chordata</taxon>
        <taxon>Craniata</taxon>
        <taxon>Vertebrata</taxon>
        <taxon>Euteleostomi</taxon>
        <taxon>Mammalia</taxon>
        <taxon>Eutheria</taxon>
        <taxon>Euarchontoglires</taxon>
        <taxon>Glires</taxon>
        <taxon>Rodentia</taxon>
        <taxon>Myomorpha</taxon>
        <taxon>Muroidea</taxon>
        <taxon>Muridae</taxon>
        <taxon>Murinae</taxon>
        <taxon>Mus</taxon>
        <taxon>Mus</taxon>
    </lineage>
</organism>
<evidence type="ECO:0000250" key="1">
    <source>
        <dbReference type="UniProtKB" id="Q86YQ8"/>
    </source>
</evidence>
<evidence type="ECO:0000250" key="2">
    <source>
        <dbReference type="UniProtKB" id="Q99829"/>
    </source>
</evidence>
<evidence type="ECO:0000255" key="3">
    <source>
        <dbReference type="PROSITE-ProRule" id="PRU00041"/>
    </source>
</evidence>
<evidence type="ECO:0000255" key="4">
    <source>
        <dbReference type="PROSITE-ProRule" id="PRU00219"/>
    </source>
</evidence>
<evidence type="ECO:0000305" key="5"/>
<evidence type="ECO:0000312" key="6">
    <source>
        <dbReference type="MGI" id="MGI:1914121"/>
    </source>
</evidence>
<sequence length="577" mass="64667">MWARDKCSVPQLEMDSRYTSATGIGDLNQLSAAIPATRVEVSVSCRNLLDRDTFSKSDPICVLYTQAVGNKEWREFGRTEVIDNTLNPDFVRKFILDYFFEERENLRFDLYDVDSKSPNLSKHDFLGQVFCTLGEIVGSQGSRLEKPIVGIPGRKCGTIILTAEELNCCRDAVLMQFCANKLDKKDFFGKSDPFLVFYRSNEDGSFTICHKTEVVKNTLNPVWQAFKISVRALCNGDYDRTIKVEVYDWDRDGSHDFIGEFTTSYRELARGQSQFNVYEVVNPKKKGKKKKYTNSGTVTLLSFLVETEVSFLDYIKGGTQINFTVAIDFTASNGNPAQPTSLHYMNPYQLNAYGMALKAVGEIVQDYDSDKMFPALGFGAKLPPDGRISHEFALNGNPQNPYCDGIEGVMEAYYRSLKSVQLYGPTNFAPVINHVARYASSVKDGSQYFVLLIVTDGVISDMAQTKESIVNASKLPMSIIIVGVGPAEFDAMVELDGDDVRVSSRGKYAERDIVQFVPFRDYIDRSGNHILSMARLAKDVLAEIPEQFLSYMRARGIKPSPAPPPYTPPTHVLQTQI</sequence>
<reference key="1">
    <citation type="journal article" date="2005" name="Science">
        <title>The transcriptional landscape of the mammalian genome.</title>
        <authorList>
            <person name="Carninci P."/>
            <person name="Kasukawa T."/>
            <person name="Katayama S."/>
            <person name="Gough J."/>
            <person name="Frith M.C."/>
            <person name="Maeda N."/>
            <person name="Oyama R."/>
            <person name="Ravasi T."/>
            <person name="Lenhard B."/>
            <person name="Wells C."/>
            <person name="Kodzius R."/>
            <person name="Shimokawa K."/>
            <person name="Bajic V.B."/>
            <person name="Brenner S.E."/>
            <person name="Batalov S."/>
            <person name="Forrest A.R."/>
            <person name="Zavolan M."/>
            <person name="Davis M.J."/>
            <person name="Wilming L.G."/>
            <person name="Aidinis V."/>
            <person name="Allen J.E."/>
            <person name="Ambesi-Impiombato A."/>
            <person name="Apweiler R."/>
            <person name="Aturaliya R.N."/>
            <person name="Bailey T.L."/>
            <person name="Bansal M."/>
            <person name="Baxter L."/>
            <person name="Beisel K.W."/>
            <person name="Bersano T."/>
            <person name="Bono H."/>
            <person name="Chalk A.M."/>
            <person name="Chiu K.P."/>
            <person name="Choudhary V."/>
            <person name="Christoffels A."/>
            <person name="Clutterbuck D.R."/>
            <person name="Crowe M.L."/>
            <person name="Dalla E."/>
            <person name="Dalrymple B.P."/>
            <person name="de Bono B."/>
            <person name="Della Gatta G."/>
            <person name="di Bernardo D."/>
            <person name="Down T."/>
            <person name="Engstrom P."/>
            <person name="Fagiolini M."/>
            <person name="Faulkner G."/>
            <person name="Fletcher C.F."/>
            <person name="Fukushima T."/>
            <person name="Furuno M."/>
            <person name="Futaki S."/>
            <person name="Gariboldi M."/>
            <person name="Georgii-Hemming P."/>
            <person name="Gingeras T.R."/>
            <person name="Gojobori T."/>
            <person name="Green R.E."/>
            <person name="Gustincich S."/>
            <person name="Harbers M."/>
            <person name="Hayashi Y."/>
            <person name="Hensch T.K."/>
            <person name="Hirokawa N."/>
            <person name="Hill D."/>
            <person name="Huminiecki L."/>
            <person name="Iacono M."/>
            <person name="Ikeo K."/>
            <person name="Iwama A."/>
            <person name="Ishikawa T."/>
            <person name="Jakt M."/>
            <person name="Kanapin A."/>
            <person name="Katoh M."/>
            <person name="Kawasawa Y."/>
            <person name="Kelso J."/>
            <person name="Kitamura H."/>
            <person name="Kitano H."/>
            <person name="Kollias G."/>
            <person name="Krishnan S.P."/>
            <person name="Kruger A."/>
            <person name="Kummerfeld S.K."/>
            <person name="Kurochkin I.V."/>
            <person name="Lareau L.F."/>
            <person name="Lazarevic D."/>
            <person name="Lipovich L."/>
            <person name="Liu J."/>
            <person name="Liuni S."/>
            <person name="McWilliam S."/>
            <person name="Madan Babu M."/>
            <person name="Madera M."/>
            <person name="Marchionni L."/>
            <person name="Matsuda H."/>
            <person name="Matsuzawa S."/>
            <person name="Miki H."/>
            <person name="Mignone F."/>
            <person name="Miyake S."/>
            <person name="Morris K."/>
            <person name="Mottagui-Tabar S."/>
            <person name="Mulder N."/>
            <person name="Nakano N."/>
            <person name="Nakauchi H."/>
            <person name="Ng P."/>
            <person name="Nilsson R."/>
            <person name="Nishiguchi S."/>
            <person name="Nishikawa S."/>
            <person name="Nori F."/>
            <person name="Ohara O."/>
            <person name="Okazaki Y."/>
            <person name="Orlando V."/>
            <person name="Pang K.C."/>
            <person name="Pavan W.J."/>
            <person name="Pavesi G."/>
            <person name="Pesole G."/>
            <person name="Petrovsky N."/>
            <person name="Piazza S."/>
            <person name="Reed J."/>
            <person name="Reid J.F."/>
            <person name="Ring B.Z."/>
            <person name="Ringwald M."/>
            <person name="Rost B."/>
            <person name="Ruan Y."/>
            <person name="Salzberg S.L."/>
            <person name="Sandelin A."/>
            <person name="Schneider C."/>
            <person name="Schoenbach C."/>
            <person name="Sekiguchi K."/>
            <person name="Semple C.A."/>
            <person name="Seno S."/>
            <person name="Sessa L."/>
            <person name="Sheng Y."/>
            <person name="Shibata Y."/>
            <person name="Shimada H."/>
            <person name="Shimada K."/>
            <person name="Silva D."/>
            <person name="Sinclair B."/>
            <person name="Sperling S."/>
            <person name="Stupka E."/>
            <person name="Sugiura K."/>
            <person name="Sultana R."/>
            <person name="Takenaka Y."/>
            <person name="Taki K."/>
            <person name="Tammoja K."/>
            <person name="Tan S.L."/>
            <person name="Tang S."/>
            <person name="Taylor M.S."/>
            <person name="Tegner J."/>
            <person name="Teichmann S.A."/>
            <person name="Ueda H.R."/>
            <person name="van Nimwegen E."/>
            <person name="Verardo R."/>
            <person name="Wei C.L."/>
            <person name="Yagi K."/>
            <person name="Yamanishi H."/>
            <person name="Zabarovsky E."/>
            <person name="Zhu S."/>
            <person name="Zimmer A."/>
            <person name="Hide W."/>
            <person name="Bult C."/>
            <person name="Grimmond S.M."/>
            <person name="Teasdale R.D."/>
            <person name="Liu E.T."/>
            <person name="Brusic V."/>
            <person name="Quackenbush J."/>
            <person name="Wahlestedt C."/>
            <person name="Mattick J.S."/>
            <person name="Hume D.A."/>
            <person name="Kai C."/>
            <person name="Sasaki D."/>
            <person name="Tomaru Y."/>
            <person name="Fukuda S."/>
            <person name="Kanamori-Katayama M."/>
            <person name="Suzuki M."/>
            <person name="Aoki J."/>
            <person name="Arakawa T."/>
            <person name="Iida J."/>
            <person name="Imamura K."/>
            <person name="Itoh M."/>
            <person name="Kato T."/>
            <person name="Kawaji H."/>
            <person name="Kawagashira N."/>
            <person name="Kawashima T."/>
            <person name="Kojima M."/>
            <person name="Kondo S."/>
            <person name="Konno H."/>
            <person name="Nakano K."/>
            <person name="Ninomiya N."/>
            <person name="Nishio T."/>
            <person name="Okada M."/>
            <person name="Plessy C."/>
            <person name="Shibata K."/>
            <person name="Shiraki T."/>
            <person name="Suzuki S."/>
            <person name="Tagami M."/>
            <person name="Waki K."/>
            <person name="Watahiki A."/>
            <person name="Okamura-Oho Y."/>
            <person name="Suzuki H."/>
            <person name="Kawai J."/>
            <person name="Hayashizaki Y."/>
        </authorList>
    </citation>
    <scope>NUCLEOTIDE SEQUENCE [LARGE SCALE MRNA]</scope>
    <source>
        <strain>C57BL/6J</strain>
        <tissue>Lung</tissue>
        <tissue>Tongue</tissue>
    </source>
</reference>
<reference key="2">
    <citation type="journal article" date="2009" name="PLoS Biol.">
        <title>Lineage-specific biology revealed by a finished genome assembly of the mouse.</title>
        <authorList>
            <person name="Church D.M."/>
            <person name="Goodstadt L."/>
            <person name="Hillier L.W."/>
            <person name="Zody M.C."/>
            <person name="Goldstein S."/>
            <person name="She X."/>
            <person name="Bult C.J."/>
            <person name="Agarwala R."/>
            <person name="Cherry J.L."/>
            <person name="DiCuccio M."/>
            <person name="Hlavina W."/>
            <person name="Kapustin Y."/>
            <person name="Meric P."/>
            <person name="Maglott D."/>
            <person name="Birtle Z."/>
            <person name="Marques A.C."/>
            <person name="Graves T."/>
            <person name="Zhou S."/>
            <person name="Teague B."/>
            <person name="Potamousis K."/>
            <person name="Churas C."/>
            <person name="Place M."/>
            <person name="Herschleb J."/>
            <person name="Runnheim R."/>
            <person name="Forrest D."/>
            <person name="Amos-Landgraf J."/>
            <person name="Schwartz D.C."/>
            <person name="Cheng Z."/>
            <person name="Lindblad-Toh K."/>
            <person name="Eichler E.E."/>
            <person name="Ponting C.P."/>
        </authorList>
    </citation>
    <scope>NUCLEOTIDE SEQUENCE [LARGE SCALE GENOMIC DNA]</scope>
    <source>
        <strain>C57BL/6J</strain>
    </source>
</reference>
<reference key="3">
    <citation type="submission" date="2005-07" db="EMBL/GenBank/DDBJ databases">
        <authorList>
            <person name="Mural R.J."/>
            <person name="Adams M.D."/>
            <person name="Myers E.W."/>
            <person name="Smith H.O."/>
            <person name="Venter J.C."/>
        </authorList>
    </citation>
    <scope>NUCLEOTIDE SEQUENCE [LARGE SCALE GENOMIC DNA]</scope>
</reference>
<reference key="4">
    <citation type="journal article" date="2004" name="Genome Res.">
        <title>The status, quality, and expansion of the NIH full-length cDNA project: the Mammalian Gene Collection (MGC).</title>
        <authorList>
            <consortium name="The MGC Project Team"/>
        </authorList>
    </citation>
    <scope>NUCLEOTIDE SEQUENCE [LARGE SCALE MRNA]</scope>
    <source>
        <tissue>Brain</tissue>
    </source>
</reference>
<feature type="chain" id="PRO_0000144850" description="Copine-8">
    <location>
        <begin position="1"/>
        <end position="577"/>
    </location>
</feature>
<feature type="domain" description="C2 1" evidence="3">
    <location>
        <begin position="19"/>
        <end position="146"/>
    </location>
</feature>
<feature type="domain" description="C2 2" evidence="3">
    <location>
        <begin position="155"/>
        <end position="278"/>
    </location>
</feature>
<feature type="domain" description="VWFA" evidence="4">
    <location>
        <begin position="322"/>
        <end position="523"/>
    </location>
</feature>
<feature type="binding site" evidence="3">
    <location>
        <position position="52"/>
    </location>
    <ligand>
        <name>Ca(2+)</name>
        <dbReference type="ChEBI" id="CHEBI:29108"/>
        <label>1</label>
    </ligand>
</feature>
<feature type="binding site" evidence="3">
    <location>
        <position position="52"/>
    </location>
    <ligand>
        <name>Ca(2+)</name>
        <dbReference type="ChEBI" id="CHEBI:29108"/>
        <label>2</label>
    </ligand>
</feature>
<feature type="binding site" evidence="3">
    <location>
        <position position="58"/>
    </location>
    <ligand>
        <name>Ca(2+)</name>
        <dbReference type="ChEBI" id="CHEBI:29108"/>
        <label>1</label>
    </ligand>
</feature>
<feature type="binding site" evidence="3">
    <location>
        <position position="112"/>
    </location>
    <ligand>
        <name>Ca(2+)</name>
        <dbReference type="ChEBI" id="CHEBI:29108"/>
        <label>1</label>
    </ligand>
</feature>
<feature type="binding site" evidence="3">
    <location>
        <position position="112"/>
    </location>
    <ligand>
        <name>Ca(2+)</name>
        <dbReference type="ChEBI" id="CHEBI:29108"/>
        <label>2</label>
    </ligand>
</feature>
<feature type="binding site" evidence="3">
    <location>
        <position position="114"/>
    </location>
    <ligand>
        <name>Ca(2+)</name>
        <dbReference type="ChEBI" id="CHEBI:29108"/>
        <label>1</label>
    </ligand>
</feature>
<feature type="binding site" evidence="3">
    <location>
        <position position="114"/>
    </location>
    <ligand>
        <name>Ca(2+)</name>
        <dbReference type="ChEBI" id="CHEBI:29108"/>
        <label>2</label>
    </ligand>
</feature>
<feature type="binding site" evidence="3">
    <location>
        <position position="114"/>
    </location>
    <ligand>
        <name>Ca(2+)</name>
        <dbReference type="ChEBI" id="CHEBI:29108"/>
        <label>3</label>
    </ligand>
</feature>
<feature type="binding site" evidence="3">
    <location>
        <position position="117"/>
    </location>
    <ligand>
        <name>Ca(2+)</name>
        <dbReference type="ChEBI" id="CHEBI:29108"/>
        <label>3</label>
    </ligand>
</feature>
<feature type="binding site" evidence="3">
    <location>
        <position position="122"/>
    </location>
    <ligand>
        <name>Ca(2+)</name>
        <dbReference type="ChEBI" id="CHEBI:29108"/>
        <label>3</label>
    </ligand>
</feature>
<feature type="binding site" evidence="3">
    <location>
        <position position="124"/>
    </location>
    <ligand>
        <name>Ca(2+)</name>
        <dbReference type="ChEBI" id="CHEBI:29108"/>
        <label>2</label>
    </ligand>
</feature>
<feature type="binding site" evidence="3">
    <location>
        <position position="124"/>
    </location>
    <ligand>
        <name>Ca(2+)</name>
        <dbReference type="ChEBI" id="CHEBI:29108"/>
        <label>3</label>
    </ligand>
</feature>
<feature type="binding site" evidence="3">
    <location>
        <position position="186"/>
    </location>
    <ligand>
        <name>Ca(2+)</name>
        <dbReference type="ChEBI" id="CHEBI:29108"/>
        <label>4</label>
    </ligand>
</feature>
<feature type="binding site" evidence="3">
    <location>
        <position position="186"/>
    </location>
    <ligand>
        <name>Ca(2+)</name>
        <dbReference type="ChEBI" id="CHEBI:29108"/>
        <label>5</label>
    </ligand>
</feature>
<feature type="binding site" evidence="3">
    <location>
        <position position="192"/>
    </location>
    <ligand>
        <name>Ca(2+)</name>
        <dbReference type="ChEBI" id="CHEBI:29108"/>
        <label>4</label>
    </ligand>
</feature>
<feature type="binding site" evidence="3">
    <location>
        <position position="248"/>
    </location>
    <ligand>
        <name>Ca(2+)</name>
        <dbReference type="ChEBI" id="CHEBI:29108"/>
        <label>4</label>
    </ligand>
</feature>
<feature type="binding site" evidence="3">
    <location>
        <position position="248"/>
    </location>
    <ligand>
        <name>Ca(2+)</name>
        <dbReference type="ChEBI" id="CHEBI:29108"/>
        <label>5</label>
    </ligand>
</feature>
<feature type="binding site" evidence="3">
    <location>
        <position position="250"/>
    </location>
    <ligand>
        <name>Ca(2+)</name>
        <dbReference type="ChEBI" id="CHEBI:29108"/>
        <label>4</label>
    </ligand>
</feature>
<feature type="binding site" evidence="3">
    <location>
        <position position="250"/>
    </location>
    <ligand>
        <name>Ca(2+)</name>
        <dbReference type="ChEBI" id="CHEBI:29108"/>
        <label>5</label>
    </ligand>
</feature>
<feature type="binding site" evidence="3">
    <location>
        <position position="256"/>
    </location>
    <ligand>
        <name>Ca(2+)</name>
        <dbReference type="ChEBI" id="CHEBI:29108"/>
        <label>5</label>
    </ligand>
</feature>
<feature type="modified residue" description="Phosphoserine" evidence="1">
    <location>
        <position position="273"/>
    </location>
</feature>
<proteinExistence type="evidence at transcript level"/>
<accession>Q9DC53</accession>
<accession>B2RS65</accession>
<accession>Q9CUZ8</accession>
<protein>
    <recommendedName>
        <fullName evidence="5">Copine-8</fullName>
    </recommendedName>
    <alternativeName>
        <fullName evidence="6">Copine VIII</fullName>
    </alternativeName>
</protein>
<dbReference type="EMBL" id="AK004559">
    <property type="protein sequence ID" value="BAB23372.1"/>
    <property type="molecule type" value="mRNA"/>
</dbReference>
<dbReference type="EMBL" id="AK010227">
    <property type="protein sequence ID" value="BAB26781.1"/>
    <property type="molecule type" value="mRNA"/>
</dbReference>
<dbReference type="EMBL" id="AC099572">
    <property type="status" value="NOT_ANNOTATED_CDS"/>
    <property type="molecule type" value="Genomic_DNA"/>
</dbReference>
<dbReference type="EMBL" id="AC113493">
    <property type="status" value="NOT_ANNOTATED_CDS"/>
    <property type="molecule type" value="Genomic_DNA"/>
</dbReference>
<dbReference type="EMBL" id="AC116812">
    <property type="status" value="NOT_ANNOTATED_CDS"/>
    <property type="molecule type" value="Genomic_DNA"/>
</dbReference>
<dbReference type="EMBL" id="CH466550">
    <property type="protein sequence ID" value="EDL04322.1"/>
    <property type="molecule type" value="Genomic_DNA"/>
</dbReference>
<dbReference type="EMBL" id="BC138745">
    <property type="protein sequence ID" value="AAI38746.1"/>
    <property type="molecule type" value="mRNA"/>
</dbReference>
<dbReference type="EMBL" id="BC138746">
    <property type="protein sequence ID" value="AAI38747.1"/>
    <property type="molecule type" value="mRNA"/>
</dbReference>
<dbReference type="CCDS" id="CCDS27758.1"/>
<dbReference type="RefSeq" id="NP_080091.1">
    <property type="nucleotide sequence ID" value="NM_025815.2"/>
</dbReference>
<dbReference type="SMR" id="Q9DC53"/>
<dbReference type="BioGRID" id="211778">
    <property type="interactions" value="3"/>
</dbReference>
<dbReference type="FunCoup" id="Q9DC53">
    <property type="interactions" value="622"/>
</dbReference>
<dbReference type="IntAct" id="Q9DC53">
    <property type="interactions" value="2"/>
</dbReference>
<dbReference type="MINT" id="Q9DC53"/>
<dbReference type="STRING" id="10090.ENSMUSP00000067774"/>
<dbReference type="iPTMnet" id="Q9DC53"/>
<dbReference type="PhosphoSitePlus" id="Q9DC53"/>
<dbReference type="jPOST" id="Q9DC53"/>
<dbReference type="PaxDb" id="10090-ENSMUSP00000067774"/>
<dbReference type="PeptideAtlas" id="Q9DC53"/>
<dbReference type="ProteomicsDB" id="278020"/>
<dbReference type="Pumba" id="Q9DC53"/>
<dbReference type="Antibodypedia" id="42502">
    <property type="antibodies" value="140 antibodies from 24 providers"/>
</dbReference>
<dbReference type="DNASU" id="66871"/>
<dbReference type="Ensembl" id="ENSMUST00000064391.12">
    <property type="protein sequence ID" value="ENSMUSP00000067774.6"/>
    <property type="gene ID" value="ENSMUSG00000052560.16"/>
</dbReference>
<dbReference type="GeneID" id="66871"/>
<dbReference type="KEGG" id="mmu:66871"/>
<dbReference type="UCSC" id="uc007xhn.1">
    <property type="organism name" value="mouse"/>
</dbReference>
<dbReference type="AGR" id="MGI:1914121"/>
<dbReference type="CTD" id="144402"/>
<dbReference type="MGI" id="MGI:1914121">
    <property type="gene designation" value="Cpne8"/>
</dbReference>
<dbReference type="VEuPathDB" id="HostDB:ENSMUSG00000052560"/>
<dbReference type="eggNOG" id="KOG1327">
    <property type="taxonomic scope" value="Eukaryota"/>
</dbReference>
<dbReference type="GeneTree" id="ENSGT00940000159679"/>
<dbReference type="HOGENOM" id="CLU_020452_3_2_1"/>
<dbReference type="InParanoid" id="Q9DC53"/>
<dbReference type="OMA" id="LMILVYF"/>
<dbReference type="OrthoDB" id="5855668at2759"/>
<dbReference type="PhylomeDB" id="Q9DC53"/>
<dbReference type="TreeFam" id="TF316419"/>
<dbReference type="Reactome" id="R-MMU-9013405">
    <property type="pathway name" value="RHOD GTPase cycle"/>
</dbReference>
<dbReference type="Reactome" id="R-MMU-9013406">
    <property type="pathway name" value="RHOQ GTPase cycle"/>
</dbReference>
<dbReference type="BioGRID-ORCS" id="66871">
    <property type="hits" value="0 hits in 76 CRISPR screens"/>
</dbReference>
<dbReference type="ChiTaRS" id="Cpne8">
    <property type="organism name" value="mouse"/>
</dbReference>
<dbReference type="PRO" id="PR:Q9DC53"/>
<dbReference type="Proteomes" id="UP000000589">
    <property type="component" value="Chromosome 15"/>
</dbReference>
<dbReference type="RNAct" id="Q9DC53">
    <property type="molecule type" value="protein"/>
</dbReference>
<dbReference type="Bgee" id="ENSMUSG00000052560">
    <property type="expression patterns" value="Expressed in lumbar dorsal root ganglion and 215 other cell types or tissues"/>
</dbReference>
<dbReference type="ExpressionAtlas" id="Q9DC53">
    <property type="expression patterns" value="baseline and differential"/>
</dbReference>
<dbReference type="GO" id="GO:0005544">
    <property type="term" value="F:calcium-dependent phospholipid binding"/>
    <property type="evidence" value="ECO:0007669"/>
    <property type="project" value="InterPro"/>
</dbReference>
<dbReference type="GO" id="GO:0046872">
    <property type="term" value="F:metal ion binding"/>
    <property type="evidence" value="ECO:0007669"/>
    <property type="project" value="UniProtKB-KW"/>
</dbReference>
<dbReference type="CDD" id="cd04048">
    <property type="entry name" value="C2A_Copine"/>
    <property type="match status" value="1"/>
</dbReference>
<dbReference type="CDD" id="cd04047">
    <property type="entry name" value="C2B_Copine"/>
    <property type="match status" value="1"/>
</dbReference>
<dbReference type="CDD" id="cd01459">
    <property type="entry name" value="vWA_copine_like"/>
    <property type="match status" value="1"/>
</dbReference>
<dbReference type="FunFam" id="2.60.40.150:FF:000071">
    <property type="entry name" value="Copine 8"/>
    <property type="match status" value="1"/>
</dbReference>
<dbReference type="FunFam" id="2.60.40.150:FF:000013">
    <property type="entry name" value="copine-9 isoform X1"/>
    <property type="match status" value="1"/>
</dbReference>
<dbReference type="Gene3D" id="2.60.40.150">
    <property type="entry name" value="C2 domain"/>
    <property type="match status" value="2"/>
</dbReference>
<dbReference type="InterPro" id="IPR000008">
    <property type="entry name" value="C2_dom"/>
</dbReference>
<dbReference type="InterPro" id="IPR035892">
    <property type="entry name" value="C2_domain_sf"/>
</dbReference>
<dbReference type="InterPro" id="IPR037768">
    <property type="entry name" value="C2B_Copine"/>
</dbReference>
<dbReference type="InterPro" id="IPR045052">
    <property type="entry name" value="Copine"/>
</dbReference>
<dbReference type="InterPro" id="IPR010734">
    <property type="entry name" value="Copine_C"/>
</dbReference>
<dbReference type="InterPro" id="IPR002035">
    <property type="entry name" value="VWF_A"/>
</dbReference>
<dbReference type="InterPro" id="IPR036465">
    <property type="entry name" value="vWFA_dom_sf"/>
</dbReference>
<dbReference type="PANTHER" id="PTHR10857">
    <property type="entry name" value="COPINE"/>
    <property type="match status" value="1"/>
</dbReference>
<dbReference type="PANTHER" id="PTHR10857:SF133">
    <property type="entry name" value="COPINE-8"/>
    <property type="match status" value="1"/>
</dbReference>
<dbReference type="Pfam" id="PF00168">
    <property type="entry name" value="C2"/>
    <property type="match status" value="2"/>
</dbReference>
<dbReference type="Pfam" id="PF07002">
    <property type="entry name" value="Copine"/>
    <property type="match status" value="1"/>
</dbReference>
<dbReference type="SMART" id="SM00239">
    <property type="entry name" value="C2"/>
    <property type="match status" value="2"/>
</dbReference>
<dbReference type="SMART" id="SM00327">
    <property type="entry name" value="VWA"/>
    <property type="match status" value="1"/>
</dbReference>
<dbReference type="SUPFAM" id="SSF49562">
    <property type="entry name" value="C2 domain (Calcium/lipid-binding domain, CaLB)"/>
    <property type="match status" value="2"/>
</dbReference>
<dbReference type="SUPFAM" id="SSF53300">
    <property type="entry name" value="vWA-like"/>
    <property type="match status" value="1"/>
</dbReference>
<dbReference type="PROSITE" id="PS50004">
    <property type="entry name" value="C2"/>
    <property type="match status" value="2"/>
</dbReference>
<dbReference type="PROSITE" id="PS50234">
    <property type="entry name" value="VWFA"/>
    <property type="match status" value="1"/>
</dbReference>
<keyword id="KW-0106">Calcium</keyword>
<keyword id="KW-0479">Metal-binding</keyword>
<keyword id="KW-0597">Phosphoprotein</keyword>
<keyword id="KW-1185">Reference proteome</keyword>
<keyword id="KW-0677">Repeat</keyword>